<sequence length="265" mass="30455">MYTDLEDNENRFYTNSDVILEEGTLGSSLGRSSRRTHEKGEDVQDPVFFNVHEVTESYFADITNPTVFRDHDEDHSLCVTHFMNVYASQDSRLFEETRVVRIPRRFDMGNRWYPMFSDLLPGSEPGAILHDTDGLQFVPRGITQDGNVYGYSSVSPLSLYLTQQHFQEIVTTINDILLATYSTYGFYNILNIILEVFTLGLWSYVCKRINYALSIDPMKRLDVYVRELNASPAFVEAQIKLINPRDSGFLSLDFQIPKPKSISTQ</sequence>
<keyword id="KW-0256">Endoplasmic reticulum</keyword>
<keyword id="KW-0472">Membrane</keyword>
<keyword id="KW-1185">Reference proteome</keyword>
<accession>Q6FVF9</accession>
<comment type="function">
    <text evidence="1">The ERF2-ERF4 complex is a palmitoyltransferase specific for Ras proteins. Palmitoylates RAS2, which is required for its proper plasma membrane localization (By similarity).</text>
</comment>
<comment type="subunit">
    <text evidence="1">Interacts with ERF2.</text>
</comment>
<comment type="subcellular location">
    <subcellularLocation>
        <location evidence="1">Endoplasmic reticulum membrane</location>
        <topology evidence="1">Peripheral membrane protein</topology>
    </subcellularLocation>
</comment>
<comment type="similarity">
    <text evidence="2">Belongs to the ERF4 family.</text>
</comment>
<organism>
    <name type="scientific">Candida glabrata (strain ATCC 2001 / BCRC 20586 / JCM 3761 / NBRC 0622 / NRRL Y-65 / CBS 138)</name>
    <name type="common">Yeast</name>
    <name type="synonym">Nakaseomyces glabratus</name>
    <dbReference type="NCBI Taxonomy" id="284593"/>
    <lineage>
        <taxon>Eukaryota</taxon>
        <taxon>Fungi</taxon>
        <taxon>Dikarya</taxon>
        <taxon>Ascomycota</taxon>
        <taxon>Saccharomycotina</taxon>
        <taxon>Saccharomycetes</taxon>
        <taxon>Saccharomycetales</taxon>
        <taxon>Saccharomycetaceae</taxon>
        <taxon>Nakaseomyces</taxon>
    </lineage>
</organism>
<name>ERFD_CANGA</name>
<dbReference type="EMBL" id="CR380951">
    <property type="protein sequence ID" value="CAG58704.2"/>
    <property type="molecule type" value="Genomic_DNA"/>
</dbReference>
<dbReference type="RefSeq" id="XP_445785.2">
    <property type="nucleotide sequence ID" value="XM_445785.2"/>
</dbReference>
<dbReference type="SMR" id="Q6FVF9"/>
<dbReference type="FunCoup" id="Q6FVF9">
    <property type="interactions" value="60"/>
</dbReference>
<dbReference type="STRING" id="284593.Q6FVF9"/>
<dbReference type="KEGG" id="cgr:2887281"/>
<dbReference type="eggNOG" id="ENOG502S30T">
    <property type="taxonomic scope" value="Eukaryota"/>
</dbReference>
<dbReference type="HOGENOM" id="CLU_087349_0_0_1"/>
<dbReference type="InParanoid" id="Q6FVF9"/>
<dbReference type="OMA" id="CITHFPN"/>
<dbReference type="Proteomes" id="UP000002428">
    <property type="component" value="Chromosome E"/>
</dbReference>
<dbReference type="GO" id="GO:0005789">
    <property type="term" value="C:endoplasmic reticulum membrane"/>
    <property type="evidence" value="ECO:0007669"/>
    <property type="project" value="UniProtKB-SubCell"/>
</dbReference>
<dbReference type="GO" id="GO:0031211">
    <property type="term" value="C:endoplasmic reticulum palmitoyltransferase complex"/>
    <property type="evidence" value="ECO:0007669"/>
    <property type="project" value="TreeGrafter"/>
</dbReference>
<dbReference type="GO" id="GO:0006612">
    <property type="term" value="P:protein targeting to membrane"/>
    <property type="evidence" value="ECO:0007669"/>
    <property type="project" value="TreeGrafter"/>
</dbReference>
<dbReference type="InterPro" id="IPR019383">
    <property type="entry name" value="Golgin_A_7/ERF4"/>
</dbReference>
<dbReference type="InterPro" id="IPR051371">
    <property type="entry name" value="Ras_palmitoyltransferase"/>
</dbReference>
<dbReference type="PANTHER" id="PTHR13254">
    <property type="entry name" value="GOLGI AUTOANTIGEN, GOLGIN SUBFAMILY A, 7"/>
    <property type="match status" value="1"/>
</dbReference>
<dbReference type="PANTHER" id="PTHR13254:SF0">
    <property type="entry name" value="GOLGIN SUBFAMILY A MEMBER 7_ERF4 DOMAIN-CONTAINING PROTEIN"/>
    <property type="match status" value="1"/>
</dbReference>
<dbReference type="Pfam" id="PF10256">
    <property type="entry name" value="Erf4"/>
    <property type="match status" value="1"/>
</dbReference>
<feature type="chain" id="PRO_0000213983" description="Ras modification protein ERF4">
    <location>
        <begin position="1"/>
        <end position="265"/>
    </location>
</feature>
<gene>
    <name type="primary">ERF4</name>
    <name type="ordered locus">CAGL0E02189g</name>
</gene>
<protein>
    <recommendedName>
        <fullName>Ras modification protein ERF4</fullName>
    </recommendedName>
</protein>
<proteinExistence type="inferred from homology"/>
<evidence type="ECO:0000250" key="1">
    <source>
        <dbReference type="UniProtKB" id="P41912"/>
    </source>
</evidence>
<evidence type="ECO:0000305" key="2"/>
<reference key="1">
    <citation type="journal article" date="2004" name="Nature">
        <title>Genome evolution in yeasts.</title>
        <authorList>
            <person name="Dujon B."/>
            <person name="Sherman D."/>
            <person name="Fischer G."/>
            <person name="Durrens P."/>
            <person name="Casaregola S."/>
            <person name="Lafontaine I."/>
            <person name="de Montigny J."/>
            <person name="Marck C."/>
            <person name="Neuveglise C."/>
            <person name="Talla E."/>
            <person name="Goffard N."/>
            <person name="Frangeul L."/>
            <person name="Aigle M."/>
            <person name="Anthouard V."/>
            <person name="Babour A."/>
            <person name="Barbe V."/>
            <person name="Barnay S."/>
            <person name="Blanchin S."/>
            <person name="Beckerich J.-M."/>
            <person name="Beyne E."/>
            <person name="Bleykasten C."/>
            <person name="Boisrame A."/>
            <person name="Boyer J."/>
            <person name="Cattolico L."/>
            <person name="Confanioleri F."/>
            <person name="de Daruvar A."/>
            <person name="Despons L."/>
            <person name="Fabre E."/>
            <person name="Fairhead C."/>
            <person name="Ferry-Dumazet H."/>
            <person name="Groppi A."/>
            <person name="Hantraye F."/>
            <person name="Hennequin C."/>
            <person name="Jauniaux N."/>
            <person name="Joyet P."/>
            <person name="Kachouri R."/>
            <person name="Kerrest A."/>
            <person name="Koszul R."/>
            <person name="Lemaire M."/>
            <person name="Lesur I."/>
            <person name="Ma L."/>
            <person name="Muller H."/>
            <person name="Nicaud J.-M."/>
            <person name="Nikolski M."/>
            <person name="Oztas S."/>
            <person name="Ozier-Kalogeropoulos O."/>
            <person name="Pellenz S."/>
            <person name="Potier S."/>
            <person name="Richard G.-F."/>
            <person name="Straub M.-L."/>
            <person name="Suleau A."/>
            <person name="Swennen D."/>
            <person name="Tekaia F."/>
            <person name="Wesolowski-Louvel M."/>
            <person name="Westhof E."/>
            <person name="Wirth B."/>
            <person name="Zeniou-Meyer M."/>
            <person name="Zivanovic Y."/>
            <person name="Bolotin-Fukuhara M."/>
            <person name="Thierry A."/>
            <person name="Bouchier C."/>
            <person name="Caudron B."/>
            <person name="Scarpelli C."/>
            <person name="Gaillardin C."/>
            <person name="Weissenbach J."/>
            <person name="Wincker P."/>
            <person name="Souciet J.-L."/>
        </authorList>
    </citation>
    <scope>NUCLEOTIDE SEQUENCE [LARGE SCALE GENOMIC DNA]</scope>
    <source>
        <strain>ATCC 2001 / BCRC 20586 / JCM 3761 / NBRC 0622 / NRRL Y-65 / CBS 138</strain>
    </source>
</reference>